<reference key="1">
    <citation type="journal article" date="2008" name="J. Mol. Evol.">
        <title>Complete sequence of the Duckweed (Lemna minor) chloroplast genome: structural organization and phylogenetic relationships to other angiosperms.</title>
        <authorList>
            <person name="Mardanov A.V."/>
            <person name="Ravin N.V."/>
            <person name="Kuznetsov B.B."/>
            <person name="Samigullin T.H."/>
            <person name="Antonov A.S."/>
            <person name="Kolganova T.V."/>
            <person name="Skyabin K.G."/>
        </authorList>
    </citation>
    <scope>NUCLEOTIDE SEQUENCE [LARGE SCALE GENOMIC DNA]</scope>
</reference>
<name>RR19_LEMMI</name>
<comment type="function">
    <text evidence="1">Protein S19 forms a complex with S13 that binds strongly to the 16S ribosomal RNA.</text>
</comment>
<comment type="subcellular location">
    <subcellularLocation>
        <location>Plastid</location>
        <location>Chloroplast</location>
    </subcellularLocation>
</comment>
<comment type="similarity">
    <text evidence="1">Belongs to the universal ribosomal protein uS19 family.</text>
</comment>
<keyword id="KW-0150">Chloroplast</keyword>
<keyword id="KW-0934">Plastid</keyword>
<keyword id="KW-0687">Ribonucleoprotein</keyword>
<keyword id="KW-0689">Ribosomal protein</keyword>
<keyword id="KW-0694">RNA-binding</keyword>
<keyword id="KW-0699">rRNA-binding</keyword>
<protein>
    <recommendedName>
        <fullName evidence="1">Small ribosomal subunit protein uS19c</fullName>
    </recommendedName>
    <alternativeName>
        <fullName evidence="2">30S ribosomal protein S19, chloroplastic</fullName>
    </alternativeName>
</protein>
<feature type="chain" id="PRO_0000354358" description="Small ribosomal subunit protein uS19c">
    <location>
        <begin position="1"/>
        <end position="92"/>
    </location>
</feature>
<proteinExistence type="inferred from homology"/>
<dbReference type="EMBL" id="DQ400350">
    <property type="protein sequence ID" value="ABD48535.1"/>
    <property type="molecule type" value="Genomic_DNA"/>
</dbReference>
<dbReference type="RefSeq" id="YP_001595548.1">
    <property type="nucleotide sequence ID" value="NC_010109.1"/>
</dbReference>
<dbReference type="SMR" id="A9L9D6"/>
<dbReference type="GeneID" id="5787623"/>
<dbReference type="GO" id="GO:0009507">
    <property type="term" value="C:chloroplast"/>
    <property type="evidence" value="ECO:0007669"/>
    <property type="project" value="UniProtKB-SubCell"/>
</dbReference>
<dbReference type="GO" id="GO:0005763">
    <property type="term" value="C:mitochondrial small ribosomal subunit"/>
    <property type="evidence" value="ECO:0007669"/>
    <property type="project" value="TreeGrafter"/>
</dbReference>
<dbReference type="GO" id="GO:0019843">
    <property type="term" value="F:rRNA binding"/>
    <property type="evidence" value="ECO:0007669"/>
    <property type="project" value="UniProtKB-UniRule"/>
</dbReference>
<dbReference type="GO" id="GO:0003735">
    <property type="term" value="F:structural constituent of ribosome"/>
    <property type="evidence" value="ECO:0007669"/>
    <property type="project" value="InterPro"/>
</dbReference>
<dbReference type="GO" id="GO:0000028">
    <property type="term" value="P:ribosomal small subunit assembly"/>
    <property type="evidence" value="ECO:0007669"/>
    <property type="project" value="TreeGrafter"/>
</dbReference>
<dbReference type="GO" id="GO:0006412">
    <property type="term" value="P:translation"/>
    <property type="evidence" value="ECO:0007669"/>
    <property type="project" value="UniProtKB-UniRule"/>
</dbReference>
<dbReference type="FunFam" id="3.30.860.10:FF:000001">
    <property type="entry name" value="30S ribosomal protein S19"/>
    <property type="match status" value="1"/>
</dbReference>
<dbReference type="Gene3D" id="3.30.860.10">
    <property type="entry name" value="30s Ribosomal Protein S19, Chain A"/>
    <property type="match status" value="1"/>
</dbReference>
<dbReference type="HAMAP" id="MF_00531">
    <property type="entry name" value="Ribosomal_uS19"/>
    <property type="match status" value="1"/>
</dbReference>
<dbReference type="InterPro" id="IPR002222">
    <property type="entry name" value="Ribosomal_uS19"/>
</dbReference>
<dbReference type="InterPro" id="IPR005732">
    <property type="entry name" value="Ribosomal_uS19_bac-type"/>
</dbReference>
<dbReference type="InterPro" id="IPR020934">
    <property type="entry name" value="Ribosomal_uS19_CS"/>
</dbReference>
<dbReference type="InterPro" id="IPR023575">
    <property type="entry name" value="Ribosomal_uS19_SF"/>
</dbReference>
<dbReference type="NCBIfam" id="TIGR01050">
    <property type="entry name" value="rpsS_bact"/>
    <property type="match status" value="1"/>
</dbReference>
<dbReference type="PANTHER" id="PTHR11880">
    <property type="entry name" value="RIBOSOMAL PROTEIN S19P FAMILY MEMBER"/>
    <property type="match status" value="1"/>
</dbReference>
<dbReference type="PANTHER" id="PTHR11880:SF8">
    <property type="entry name" value="SMALL RIBOSOMAL SUBUNIT PROTEIN US19M"/>
    <property type="match status" value="1"/>
</dbReference>
<dbReference type="Pfam" id="PF00203">
    <property type="entry name" value="Ribosomal_S19"/>
    <property type="match status" value="1"/>
</dbReference>
<dbReference type="PIRSF" id="PIRSF002144">
    <property type="entry name" value="Ribosomal_S19"/>
    <property type="match status" value="1"/>
</dbReference>
<dbReference type="PRINTS" id="PR00975">
    <property type="entry name" value="RIBOSOMALS19"/>
</dbReference>
<dbReference type="SUPFAM" id="SSF54570">
    <property type="entry name" value="Ribosomal protein S19"/>
    <property type="match status" value="1"/>
</dbReference>
<dbReference type="PROSITE" id="PS00323">
    <property type="entry name" value="RIBOSOMAL_S19"/>
    <property type="match status" value="1"/>
</dbReference>
<evidence type="ECO:0000255" key="1">
    <source>
        <dbReference type="HAMAP-Rule" id="MF_00531"/>
    </source>
</evidence>
<evidence type="ECO:0000305" key="2"/>
<accession>A9L9D6</accession>
<sequence>MTRSIKKNPFVANHLLVKIEKLNMRQEKEIIVTWSRASTIIPTMIGHTIAIHNGKEHLPIYITDRMVGHKLGEFAPTRSFGKHARNDIKSRR</sequence>
<gene>
    <name evidence="1" type="primary">rps19</name>
</gene>
<organism>
    <name type="scientific">Lemna minor</name>
    <name type="common">Common duckweed</name>
    <dbReference type="NCBI Taxonomy" id="4472"/>
    <lineage>
        <taxon>Eukaryota</taxon>
        <taxon>Viridiplantae</taxon>
        <taxon>Streptophyta</taxon>
        <taxon>Embryophyta</taxon>
        <taxon>Tracheophyta</taxon>
        <taxon>Spermatophyta</taxon>
        <taxon>Magnoliopsida</taxon>
        <taxon>Liliopsida</taxon>
        <taxon>Araceae</taxon>
        <taxon>Lemnoideae</taxon>
        <taxon>Lemna</taxon>
    </lineage>
</organism>
<geneLocation type="chloroplast"/>